<organism>
    <name type="scientific">Lacticaseibacillus casei (strain BL23)</name>
    <name type="common">Lactobacillus casei</name>
    <dbReference type="NCBI Taxonomy" id="543734"/>
    <lineage>
        <taxon>Bacteria</taxon>
        <taxon>Bacillati</taxon>
        <taxon>Bacillota</taxon>
        <taxon>Bacilli</taxon>
        <taxon>Lactobacillales</taxon>
        <taxon>Lactobacillaceae</taxon>
        <taxon>Lacticaseibacillus</taxon>
    </lineage>
</organism>
<accession>B3WDY6</accession>
<name>SEPF_LACCB</name>
<comment type="function">
    <text evidence="1">Cell division protein that is part of the divisome complex and is recruited early to the Z-ring. Probably stimulates Z-ring formation, perhaps through the cross-linking of FtsZ protofilaments. Its function overlaps with FtsA.</text>
</comment>
<comment type="subunit">
    <text evidence="1">Homodimer. Interacts with FtsZ.</text>
</comment>
<comment type="subcellular location">
    <subcellularLocation>
        <location evidence="1">Cytoplasm</location>
    </subcellularLocation>
    <text evidence="1">Localizes to the division site, in a FtsZ-dependent manner.</text>
</comment>
<comment type="similarity">
    <text evidence="1">Belongs to the SepF family.</text>
</comment>
<reference key="1">
    <citation type="submission" date="2008-06" db="EMBL/GenBank/DDBJ databases">
        <title>Lactobacillus casei BL23 complete genome sequence.</title>
        <authorList>
            <person name="Maze A."/>
            <person name="Boel G."/>
            <person name="Bourand A."/>
            <person name="Loux V."/>
            <person name="Gibrat J.F."/>
            <person name="Zuniga M."/>
            <person name="Hartke A."/>
            <person name="Deutscher J."/>
        </authorList>
    </citation>
    <scope>NUCLEOTIDE SEQUENCE [LARGE SCALE GENOMIC DNA]</scope>
    <source>
        <strain>BL23</strain>
    </source>
</reference>
<feature type="chain" id="PRO_1000138470" description="Cell division protein SepF">
    <location>
        <begin position="1"/>
        <end position="151"/>
    </location>
</feature>
<feature type="region of interest" description="Disordered" evidence="2">
    <location>
        <begin position="17"/>
        <end position="42"/>
    </location>
</feature>
<feature type="compositionally biased region" description="Acidic residues" evidence="2">
    <location>
        <begin position="17"/>
        <end position="29"/>
    </location>
</feature>
<keyword id="KW-0131">Cell cycle</keyword>
<keyword id="KW-0132">Cell division</keyword>
<keyword id="KW-0963">Cytoplasm</keyword>
<keyword id="KW-0717">Septation</keyword>
<evidence type="ECO:0000255" key="1">
    <source>
        <dbReference type="HAMAP-Rule" id="MF_01197"/>
    </source>
</evidence>
<evidence type="ECO:0000256" key="2">
    <source>
        <dbReference type="SAM" id="MobiDB-lite"/>
    </source>
</evidence>
<gene>
    <name evidence="1" type="primary">sepF</name>
    <name type="ordered locus">LCABL_15060</name>
</gene>
<dbReference type="EMBL" id="FM177140">
    <property type="protein sequence ID" value="CAQ66587.1"/>
    <property type="molecule type" value="Genomic_DNA"/>
</dbReference>
<dbReference type="SMR" id="B3WDY6"/>
<dbReference type="KEGG" id="lcb:LCABL_15060"/>
<dbReference type="HOGENOM" id="CLU_078499_4_1_9"/>
<dbReference type="GO" id="GO:0005737">
    <property type="term" value="C:cytoplasm"/>
    <property type="evidence" value="ECO:0007669"/>
    <property type="project" value="UniProtKB-SubCell"/>
</dbReference>
<dbReference type="GO" id="GO:0000917">
    <property type="term" value="P:division septum assembly"/>
    <property type="evidence" value="ECO:0007669"/>
    <property type="project" value="UniProtKB-KW"/>
</dbReference>
<dbReference type="GO" id="GO:0043093">
    <property type="term" value="P:FtsZ-dependent cytokinesis"/>
    <property type="evidence" value="ECO:0007669"/>
    <property type="project" value="UniProtKB-UniRule"/>
</dbReference>
<dbReference type="Gene3D" id="3.30.110.150">
    <property type="entry name" value="SepF-like protein"/>
    <property type="match status" value="1"/>
</dbReference>
<dbReference type="HAMAP" id="MF_01197">
    <property type="entry name" value="SepF"/>
    <property type="match status" value="1"/>
</dbReference>
<dbReference type="InterPro" id="IPR023052">
    <property type="entry name" value="Cell_div_SepF"/>
</dbReference>
<dbReference type="InterPro" id="IPR007561">
    <property type="entry name" value="Cell_div_SepF/SepF-rel"/>
</dbReference>
<dbReference type="InterPro" id="IPR038594">
    <property type="entry name" value="SepF-like_sf"/>
</dbReference>
<dbReference type="PANTHER" id="PTHR35798">
    <property type="entry name" value="CELL DIVISION PROTEIN SEPF"/>
    <property type="match status" value="1"/>
</dbReference>
<dbReference type="PANTHER" id="PTHR35798:SF1">
    <property type="entry name" value="CELL DIVISION PROTEIN SEPF"/>
    <property type="match status" value="1"/>
</dbReference>
<dbReference type="Pfam" id="PF04472">
    <property type="entry name" value="SepF"/>
    <property type="match status" value="1"/>
</dbReference>
<sequence>MAFEKLGEKFSNFFAMDNEDDYQDQEDEQAQQPAPEQPVDNHYRSNKVVSMATPAGKTAKIVVYEPRVYSDAKEIGSHLLNNRAVVINFDRIGSDDATRIVDFLTGTVFAINGEIKRVGESIFLVTPANFEIDGSLASTIDSDGLNLSSQH</sequence>
<protein>
    <recommendedName>
        <fullName evidence="1">Cell division protein SepF</fullName>
    </recommendedName>
</protein>
<proteinExistence type="inferred from homology"/>